<organism>
    <name type="scientific">Shewanella baltica (strain OS223)</name>
    <dbReference type="NCBI Taxonomy" id="407976"/>
    <lineage>
        <taxon>Bacteria</taxon>
        <taxon>Pseudomonadati</taxon>
        <taxon>Pseudomonadota</taxon>
        <taxon>Gammaproteobacteria</taxon>
        <taxon>Alteromonadales</taxon>
        <taxon>Shewanellaceae</taxon>
        <taxon>Shewanella</taxon>
    </lineage>
</organism>
<proteinExistence type="inferred from homology"/>
<sequence length="962" mass="104621">MTKQTLTQLEQHDLFLRRHIGPDSNQQQAMLNFVGAESLEDLTAQIVPESIRLSQDLSIGDSCGEAEGIAYIRGLADQNQVFKSYIGMGYYGTQVPNVILRNVFENPGWYTAYTPYQPEIAQGRLEAILNFQQVSMDLTGLDLASASLLDEATAAAEAMALAKRVSKAKKANIFFVADDVFPQTLDVVKTRAECFGFEVVVGPASEAVNYELFGALFQYTNRFGQITDFTELFATLRAKNVIVTVAADIMSLVLLKSPGSMGADVVFGSAQRFGVPMGFGGPHAAFFVARDEHKRSMPGRIIGVSKDARGNRALRMAMQTREQHIRREKANSNICTAQILLANMASFYAVFHGPDGLKTIASRIHRFADILAAGLQAKGVSLVNSTWFDTISIKGLDVAAVNARALAAEMNLRFDADGTVGVSLDETTLRTDIDALFDVILGAGHGLDVAALDAQIVGQGSQSIPAALVRQDAILSHPTFNRYQSETEMMRYIKRLESKDLALNYSMISLGSCTMKLNAAVEMLPVSWPEFANMHPFSPLDQAKGYTQLIEELSTWLVNITGYDAVCIQPNSGAQGEYAGLLAIKKYHESRGDAHRNICLIPQSAHGTNPASAQLAGMQVVVTACDKQGNVDLDDLKTKAAEVAGNLSCIMITYPSTHGVYEESIREICDIVHQHGGQVYLDGANMNAQVGLTSPGFIGADVSHLNLHKTFAIPHGGGGPGMGPIGVKSHLAPFVAGHVVVKPGRESDHNGAVSAAPYGSAGILPISWMYIKLLGSQGLKKSTQTALLNANYVMKKLSEHYPVLFRGRNDRVAHECIIDLRPLKEASGVTEMDIAKRLNDYGFHAPTMSFPVAGTLMIEPTESESKVELDRFIDAMVSIRAEIAKVESGEWPVDNNPLHNAPHTMADIMDPEFDTRPYSREVAVFPSAAVRTNKFWPTVNRIDDVYGDRNLMCSCAPLSDYE</sequence>
<feature type="chain" id="PRO_1000147971" description="Glycine dehydrogenase (decarboxylating)">
    <location>
        <begin position="1"/>
        <end position="962"/>
    </location>
</feature>
<feature type="modified residue" description="N6-(pyridoxal phosphate)lysine" evidence="1">
    <location>
        <position position="709"/>
    </location>
</feature>
<reference key="1">
    <citation type="submission" date="2008-12" db="EMBL/GenBank/DDBJ databases">
        <title>Complete sequence of chromosome of Shewanella baltica OS223.</title>
        <authorList>
            <consortium name="US DOE Joint Genome Institute"/>
            <person name="Lucas S."/>
            <person name="Copeland A."/>
            <person name="Lapidus A."/>
            <person name="Glavina del Rio T."/>
            <person name="Dalin E."/>
            <person name="Tice H."/>
            <person name="Bruce D."/>
            <person name="Goodwin L."/>
            <person name="Pitluck S."/>
            <person name="Chertkov O."/>
            <person name="Meincke L."/>
            <person name="Brettin T."/>
            <person name="Detter J.C."/>
            <person name="Han C."/>
            <person name="Kuske C.R."/>
            <person name="Larimer F."/>
            <person name="Land M."/>
            <person name="Hauser L."/>
            <person name="Kyrpides N."/>
            <person name="Ovchinnikova G."/>
            <person name="Brettar I."/>
            <person name="Rodrigues J."/>
            <person name="Konstantinidis K."/>
            <person name="Tiedje J."/>
        </authorList>
    </citation>
    <scope>NUCLEOTIDE SEQUENCE [LARGE SCALE GENOMIC DNA]</scope>
    <source>
        <strain>OS223</strain>
    </source>
</reference>
<comment type="function">
    <text evidence="1">The glycine cleavage system catalyzes the degradation of glycine. The P protein binds the alpha-amino group of glycine through its pyridoxal phosphate cofactor; CO(2) is released and the remaining methylamine moiety is then transferred to the lipoamide cofactor of the H protein.</text>
</comment>
<comment type="catalytic activity">
    <reaction evidence="1">
        <text>N(6)-[(R)-lipoyl]-L-lysyl-[glycine-cleavage complex H protein] + glycine + H(+) = N(6)-[(R)-S(8)-aminomethyldihydrolipoyl]-L-lysyl-[glycine-cleavage complex H protein] + CO2</text>
        <dbReference type="Rhea" id="RHEA:24304"/>
        <dbReference type="Rhea" id="RHEA-COMP:10494"/>
        <dbReference type="Rhea" id="RHEA-COMP:10495"/>
        <dbReference type="ChEBI" id="CHEBI:15378"/>
        <dbReference type="ChEBI" id="CHEBI:16526"/>
        <dbReference type="ChEBI" id="CHEBI:57305"/>
        <dbReference type="ChEBI" id="CHEBI:83099"/>
        <dbReference type="ChEBI" id="CHEBI:83143"/>
        <dbReference type="EC" id="1.4.4.2"/>
    </reaction>
</comment>
<comment type="cofactor">
    <cofactor evidence="1">
        <name>pyridoxal 5'-phosphate</name>
        <dbReference type="ChEBI" id="CHEBI:597326"/>
    </cofactor>
</comment>
<comment type="subunit">
    <text evidence="1">The glycine cleavage system is composed of four proteins: P, T, L and H.</text>
</comment>
<comment type="similarity">
    <text evidence="1">Belongs to the GcvP family.</text>
</comment>
<gene>
    <name evidence="1" type="primary">gcvP</name>
    <name type="ordered locus">Sbal223_3617</name>
</gene>
<keyword id="KW-0560">Oxidoreductase</keyword>
<keyword id="KW-0663">Pyridoxal phosphate</keyword>
<name>GCSP_SHEB2</name>
<accession>B8EB45</accession>
<evidence type="ECO:0000255" key="1">
    <source>
        <dbReference type="HAMAP-Rule" id="MF_00711"/>
    </source>
</evidence>
<protein>
    <recommendedName>
        <fullName evidence="1">Glycine dehydrogenase (decarboxylating)</fullName>
        <ecNumber evidence="1">1.4.4.2</ecNumber>
    </recommendedName>
    <alternativeName>
        <fullName evidence="1">Glycine cleavage system P-protein</fullName>
    </alternativeName>
    <alternativeName>
        <fullName evidence="1">Glycine decarboxylase</fullName>
    </alternativeName>
    <alternativeName>
        <fullName evidence="1">Glycine dehydrogenase (aminomethyl-transferring)</fullName>
    </alternativeName>
</protein>
<dbReference type="EC" id="1.4.4.2" evidence="1"/>
<dbReference type="EMBL" id="CP001252">
    <property type="protein sequence ID" value="ACK48096.1"/>
    <property type="molecule type" value="Genomic_DNA"/>
</dbReference>
<dbReference type="RefSeq" id="WP_012588561.1">
    <property type="nucleotide sequence ID" value="NC_011663.1"/>
</dbReference>
<dbReference type="SMR" id="B8EB45"/>
<dbReference type="KEGG" id="sbp:Sbal223_3617"/>
<dbReference type="HOGENOM" id="CLU_004620_3_2_6"/>
<dbReference type="Proteomes" id="UP000002507">
    <property type="component" value="Chromosome"/>
</dbReference>
<dbReference type="GO" id="GO:0005829">
    <property type="term" value="C:cytosol"/>
    <property type="evidence" value="ECO:0007669"/>
    <property type="project" value="TreeGrafter"/>
</dbReference>
<dbReference type="GO" id="GO:0005960">
    <property type="term" value="C:glycine cleavage complex"/>
    <property type="evidence" value="ECO:0007669"/>
    <property type="project" value="TreeGrafter"/>
</dbReference>
<dbReference type="GO" id="GO:0016594">
    <property type="term" value="F:glycine binding"/>
    <property type="evidence" value="ECO:0007669"/>
    <property type="project" value="TreeGrafter"/>
</dbReference>
<dbReference type="GO" id="GO:0004375">
    <property type="term" value="F:glycine dehydrogenase (decarboxylating) activity"/>
    <property type="evidence" value="ECO:0007669"/>
    <property type="project" value="UniProtKB-EC"/>
</dbReference>
<dbReference type="GO" id="GO:0030170">
    <property type="term" value="F:pyridoxal phosphate binding"/>
    <property type="evidence" value="ECO:0007669"/>
    <property type="project" value="TreeGrafter"/>
</dbReference>
<dbReference type="GO" id="GO:0019464">
    <property type="term" value="P:glycine decarboxylation via glycine cleavage system"/>
    <property type="evidence" value="ECO:0007669"/>
    <property type="project" value="UniProtKB-UniRule"/>
</dbReference>
<dbReference type="CDD" id="cd00613">
    <property type="entry name" value="GDC-P"/>
    <property type="match status" value="2"/>
</dbReference>
<dbReference type="FunFam" id="3.40.640.10:FF:000005">
    <property type="entry name" value="Glycine dehydrogenase (decarboxylating), mitochondrial"/>
    <property type="match status" value="1"/>
</dbReference>
<dbReference type="FunFam" id="3.90.1150.10:FF:000007">
    <property type="entry name" value="Glycine dehydrogenase (decarboxylating), mitochondrial"/>
    <property type="match status" value="1"/>
</dbReference>
<dbReference type="FunFam" id="3.40.640.10:FF:000007">
    <property type="entry name" value="glycine dehydrogenase (Decarboxylating), mitochondrial"/>
    <property type="match status" value="1"/>
</dbReference>
<dbReference type="Gene3D" id="3.90.1150.10">
    <property type="entry name" value="Aspartate Aminotransferase, domain 1"/>
    <property type="match status" value="2"/>
</dbReference>
<dbReference type="Gene3D" id="3.40.640.10">
    <property type="entry name" value="Type I PLP-dependent aspartate aminotransferase-like (Major domain)"/>
    <property type="match status" value="2"/>
</dbReference>
<dbReference type="HAMAP" id="MF_00711">
    <property type="entry name" value="GcvP"/>
    <property type="match status" value="1"/>
</dbReference>
<dbReference type="InterPro" id="IPR003437">
    <property type="entry name" value="GcvP"/>
</dbReference>
<dbReference type="InterPro" id="IPR049316">
    <property type="entry name" value="GDC-P_C"/>
</dbReference>
<dbReference type="InterPro" id="IPR049315">
    <property type="entry name" value="GDC-P_N"/>
</dbReference>
<dbReference type="InterPro" id="IPR020581">
    <property type="entry name" value="GDC_P"/>
</dbReference>
<dbReference type="InterPro" id="IPR015424">
    <property type="entry name" value="PyrdxlP-dep_Trfase"/>
</dbReference>
<dbReference type="InterPro" id="IPR015421">
    <property type="entry name" value="PyrdxlP-dep_Trfase_major"/>
</dbReference>
<dbReference type="InterPro" id="IPR015422">
    <property type="entry name" value="PyrdxlP-dep_Trfase_small"/>
</dbReference>
<dbReference type="NCBIfam" id="TIGR00461">
    <property type="entry name" value="gcvP"/>
    <property type="match status" value="1"/>
</dbReference>
<dbReference type="NCBIfam" id="NF003346">
    <property type="entry name" value="PRK04366.1"/>
    <property type="match status" value="1"/>
</dbReference>
<dbReference type="PANTHER" id="PTHR11773:SF13">
    <property type="entry name" value="GLYCINE DEHYDROGENASE (DECARBOXYLATING)"/>
    <property type="match status" value="1"/>
</dbReference>
<dbReference type="PANTHER" id="PTHR11773">
    <property type="entry name" value="GLYCINE DEHYDROGENASE, DECARBOXYLATING"/>
    <property type="match status" value="1"/>
</dbReference>
<dbReference type="Pfam" id="PF21478">
    <property type="entry name" value="GcvP2_C"/>
    <property type="match status" value="1"/>
</dbReference>
<dbReference type="Pfam" id="PF02347">
    <property type="entry name" value="GDC-P"/>
    <property type="match status" value="2"/>
</dbReference>
<dbReference type="SUPFAM" id="SSF53383">
    <property type="entry name" value="PLP-dependent transferases"/>
    <property type="match status" value="2"/>
</dbReference>